<comment type="function">
    <text evidence="1 2">The amidated peptide is bactericidal on human pathogens like S.aureus or E.coli, as well as on the fish pathogen A.salmonicida (PubMed:29108968). May also be active against a variety of fungi (By similarity). It can kill bacteria in less than 30 minutes (S.aureus) and 120 minutes (V.vulnificus) (PubMed:29108968). It induces hemolysis of erythrocytes from human and fishes (sea bass and lesser-spotted dogfish) (PubMed:29108968).</text>
</comment>
<comment type="function">
    <text evidence="2">The non-amidated peptide only inhibits growth of human pathogens like S.aureus or E.coli, and the fish pathogen A.salmonicida. Induces hemolysis of erythrocytes from human and fishes (sea bass and lesser-spotted dogfish).</text>
</comment>
<comment type="subcellular location">
    <subcellularLocation>
        <location evidence="2">Secreted</location>
    </subcellularLocation>
</comment>
<comment type="tissue specificity">
    <text evidence="5">Expressed in gill, skin, intestine, spleen, anterior kidney, and blood cells.</text>
</comment>
<comment type="PTM">
    <text evidence="2">This peptide exists in N-terminally amidated and non-amidated forms. The amidated form is more active and has a greater alpha-helix content than the non-amidated form.</text>
</comment>
<comment type="mass spectrometry" mass="2408.22" method="MALDI" evidence="2">
    <text>Amidated form.</text>
</comment>
<comment type="mass spectrometry" mass="2409.09" method="MALDI" evidence="2">
    <text>Non-amidated form.</text>
</comment>
<comment type="similarity">
    <text evidence="4">Belongs to the pleurocidin family.</text>
</comment>
<feature type="signal peptide" evidence="2">
    <location>
        <begin position="1"/>
        <end position="22"/>
    </location>
</feature>
<feature type="peptide" id="PRO_0000452481" description="Pteroicidin-alpha" evidence="2">
    <location>
        <begin position="23"/>
        <end position="43"/>
    </location>
</feature>
<feature type="propeptide" id="PRO_0000452482" evidence="2">
    <location>
        <begin position="44"/>
        <end position="66"/>
    </location>
</feature>
<feature type="modified residue" description="Arginine amide; partial" evidence="3">
    <location>
        <position position="43"/>
    </location>
</feature>
<sequence length="66" mass="7508">MKCIALFLVLSMVVLMAEPGEAFIHHIIGGLFHVGKSIHDLIRGKNRDMAEQQELERAFDRERAFA</sequence>
<keyword id="KW-0027">Amidation</keyword>
<keyword id="KW-0044">Antibiotic</keyword>
<keyword id="KW-0929">Antimicrobial</keyword>
<keyword id="KW-0903">Direct protein sequencing</keyword>
<keyword id="KW-0295">Fungicide</keyword>
<keyword id="KW-0391">Immunity</keyword>
<keyword id="KW-0399">Innate immunity</keyword>
<keyword id="KW-0964">Secreted</keyword>
<keyword id="KW-0732">Signal</keyword>
<organism>
    <name type="scientific">Pterois volitans</name>
    <name type="common">Red lionfish</name>
    <name type="synonym">Gasterosteus volitans</name>
    <dbReference type="NCBI Taxonomy" id="185886"/>
    <lineage>
        <taxon>Eukaryota</taxon>
        <taxon>Metazoa</taxon>
        <taxon>Chordata</taxon>
        <taxon>Craniata</taxon>
        <taxon>Vertebrata</taxon>
        <taxon>Euteleostomi</taxon>
        <taxon>Actinopterygii</taxon>
        <taxon>Neopterygii</taxon>
        <taxon>Teleostei</taxon>
        <taxon>Neoteleostei</taxon>
        <taxon>Acanthomorphata</taxon>
        <taxon>Eupercaria</taxon>
        <taxon>Perciformes</taxon>
        <taxon>Scorpaenoidei</taxon>
        <taxon>Scorpaenidae</taxon>
        <taxon>Pteroinae</taxon>
        <taxon>Pterois</taxon>
    </lineage>
</organism>
<accession>P0DUJ5</accession>
<evidence type="ECO:0000250" key="1">
    <source>
        <dbReference type="UniProtKB" id="Q8UUG2"/>
    </source>
</evidence>
<evidence type="ECO:0000269" key="2">
    <source>
    </source>
</evidence>
<evidence type="ECO:0000303" key="3">
    <source>
    </source>
</evidence>
<evidence type="ECO:0000305" key="4"/>
<evidence type="ECO:0000305" key="5">
    <source>
    </source>
</evidence>
<dbReference type="GO" id="GO:0005576">
    <property type="term" value="C:extracellular region"/>
    <property type="evidence" value="ECO:0007669"/>
    <property type="project" value="UniProtKB-SubCell"/>
</dbReference>
<dbReference type="GO" id="GO:0042742">
    <property type="term" value="P:defense response to bacterium"/>
    <property type="evidence" value="ECO:0007669"/>
    <property type="project" value="UniProtKB-KW"/>
</dbReference>
<dbReference type="GO" id="GO:0050832">
    <property type="term" value="P:defense response to fungus"/>
    <property type="evidence" value="ECO:0007669"/>
    <property type="project" value="UniProtKB-KW"/>
</dbReference>
<dbReference type="GO" id="GO:0045087">
    <property type="term" value="P:innate immune response"/>
    <property type="evidence" value="ECO:0007669"/>
    <property type="project" value="UniProtKB-KW"/>
</dbReference>
<dbReference type="GO" id="GO:0031640">
    <property type="term" value="P:killing of cells of another organism"/>
    <property type="evidence" value="ECO:0007669"/>
    <property type="project" value="UniProtKB-KW"/>
</dbReference>
<dbReference type="InterPro" id="IPR012515">
    <property type="entry name" value="Antimicrobial12"/>
</dbReference>
<dbReference type="Pfam" id="PF08107">
    <property type="entry name" value="Antimicrobial12"/>
    <property type="match status" value="1"/>
</dbReference>
<name>MORO_PTEVL</name>
<proteinExistence type="evidence at protein level"/>
<protein>
    <recommendedName>
        <fullName evidence="3">Pteroicidin-alpha</fullName>
        <shortName evidence="3">Alpha-Pte-CONH2</shortName>
        <shortName evidence="3">Alpha-Pte-COOH</shortName>
    </recommendedName>
    <alternativeName>
        <fullName evidence="3">Piscidin-like peptide</fullName>
    </alternativeName>
</protein>
<reference key="1">
    <citation type="journal article" date="2018" name="Fish Shellfish Immunol.">
        <title>Identification of a moronecidin-like antimicrobial peptide in the venomous fish Pterois volitans: Functional and structural study of pteroicidin-alpha.</title>
        <authorList>
            <person name="Houyvet B."/>
            <person name="Bouchon-Navaro Y."/>
            <person name="Bouchon C."/>
            <person name="Goux D."/>
            <person name="Bernay B."/>
            <person name="Corre E."/>
            <person name="Zatylny-Gaudin C."/>
        </authorList>
    </citation>
    <scope>NUCLEOTIDE SEQUENCE [MRNA]</scope>
    <scope>PROTEIN SEQUENCE OF 23-66</scope>
    <scope>SUBCELLULAR LOCATION</scope>
    <scope>AMIDATION AT ARG-43</scope>
    <scope>MASS SPECTROMETRY</scope>
    <scope>SYNTHESIS OF 23-66</scope>
    <source>
        <tissue>Venom</tissue>
    </source>
</reference>